<sequence length="79" mass="9098">MSEISVTQTLDTLGLRCPEPVMLVRKNIRHLNDGEILLIIADDPATTRDIPSFCQFMDHTLLQSEVEKPPFKYWVKRGK</sequence>
<protein>
    <recommendedName>
        <fullName evidence="1">Sulfur carrier protein TusA</fullName>
    </recommendedName>
</protein>
<feature type="chain" id="PRO_1000050014" description="Sulfur carrier protein TusA">
    <location>
        <begin position="1"/>
        <end position="79"/>
    </location>
</feature>
<feature type="active site" description="Cysteine persulfide intermediate" evidence="1">
    <location>
        <position position="17"/>
    </location>
</feature>
<comment type="function">
    <text evidence="1">Sulfur carrier protein which probably makes part of a sulfur-relay system.</text>
</comment>
<comment type="subcellular location">
    <subcellularLocation>
        <location evidence="1">Cytoplasm</location>
    </subcellularLocation>
</comment>
<comment type="similarity">
    <text evidence="1">Belongs to the sulfur carrier protein TusA family.</text>
</comment>
<organism>
    <name type="scientific">Haemophilus influenzae (strain PittEE)</name>
    <dbReference type="NCBI Taxonomy" id="374930"/>
    <lineage>
        <taxon>Bacteria</taxon>
        <taxon>Pseudomonadati</taxon>
        <taxon>Pseudomonadota</taxon>
        <taxon>Gammaproteobacteria</taxon>
        <taxon>Pasteurellales</taxon>
        <taxon>Pasteurellaceae</taxon>
        <taxon>Haemophilus</taxon>
    </lineage>
</organism>
<reference key="1">
    <citation type="journal article" date="2007" name="Genome Biol.">
        <title>Characterization and modeling of the Haemophilus influenzae core and supragenomes based on the complete genomic sequences of Rd and 12 clinical nontypeable strains.</title>
        <authorList>
            <person name="Hogg J.S."/>
            <person name="Hu F.Z."/>
            <person name="Janto B."/>
            <person name="Boissy R."/>
            <person name="Hayes J."/>
            <person name="Keefe R."/>
            <person name="Post J.C."/>
            <person name="Ehrlich G.D."/>
        </authorList>
    </citation>
    <scope>NUCLEOTIDE SEQUENCE [LARGE SCALE GENOMIC DNA]</scope>
    <source>
        <strain>PittEE</strain>
    </source>
</reference>
<accession>A5UE04</accession>
<dbReference type="EMBL" id="CP000671">
    <property type="protein sequence ID" value="ABQ99005.1"/>
    <property type="molecule type" value="Genomic_DNA"/>
</dbReference>
<dbReference type="SMR" id="A5UE04"/>
<dbReference type="KEGG" id="hip:CGSHiEE_08520"/>
<dbReference type="HOGENOM" id="CLU_165255_5_0_6"/>
<dbReference type="GO" id="GO:0005737">
    <property type="term" value="C:cytoplasm"/>
    <property type="evidence" value="ECO:0007669"/>
    <property type="project" value="UniProtKB-SubCell"/>
</dbReference>
<dbReference type="GO" id="GO:0097163">
    <property type="term" value="F:sulfur carrier activity"/>
    <property type="evidence" value="ECO:0007669"/>
    <property type="project" value="UniProtKB-UniRule"/>
</dbReference>
<dbReference type="GO" id="GO:0002143">
    <property type="term" value="P:tRNA wobble position uridine thiolation"/>
    <property type="evidence" value="ECO:0007669"/>
    <property type="project" value="InterPro"/>
</dbReference>
<dbReference type="Gene3D" id="3.30.110.40">
    <property type="entry name" value="TusA-like domain"/>
    <property type="match status" value="1"/>
</dbReference>
<dbReference type="HAMAP" id="MF_00413">
    <property type="entry name" value="Thiourid_synth_A"/>
    <property type="match status" value="1"/>
</dbReference>
<dbReference type="InterPro" id="IPR022931">
    <property type="entry name" value="Sulphur_carrier_TusA"/>
</dbReference>
<dbReference type="InterPro" id="IPR001455">
    <property type="entry name" value="TusA-like"/>
</dbReference>
<dbReference type="InterPro" id="IPR036868">
    <property type="entry name" value="TusA-like_sf"/>
</dbReference>
<dbReference type="NCBIfam" id="NF001423">
    <property type="entry name" value="PRK00299.1"/>
    <property type="match status" value="1"/>
</dbReference>
<dbReference type="PANTHER" id="PTHR33279:SF2">
    <property type="entry name" value="SULFUR CARRIER PROTEIN TUSA"/>
    <property type="match status" value="1"/>
</dbReference>
<dbReference type="PANTHER" id="PTHR33279">
    <property type="entry name" value="SULFUR CARRIER PROTEIN YEDF-RELATED"/>
    <property type="match status" value="1"/>
</dbReference>
<dbReference type="Pfam" id="PF01206">
    <property type="entry name" value="TusA"/>
    <property type="match status" value="1"/>
</dbReference>
<dbReference type="SUPFAM" id="SSF64307">
    <property type="entry name" value="SirA-like"/>
    <property type="match status" value="1"/>
</dbReference>
<dbReference type="PROSITE" id="PS01148">
    <property type="entry name" value="UPF0033"/>
    <property type="match status" value="1"/>
</dbReference>
<evidence type="ECO:0000255" key="1">
    <source>
        <dbReference type="HAMAP-Rule" id="MF_00413"/>
    </source>
</evidence>
<gene>
    <name evidence="1" type="primary">tusA</name>
    <name type="ordered locus">CGSHiEE_08520</name>
</gene>
<proteinExistence type="inferred from homology"/>
<name>TUSA_HAEIE</name>
<keyword id="KW-0963">Cytoplasm</keyword>